<protein>
    <recommendedName>
        <fullName evidence="1">D-aminoacyl-tRNA deacylase</fullName>
        <shortName evidence="1">DTD</shortName>
        <ecNumber evidence="1">3.1.1.96</ecNumber>
    </recommendedName>
    <alternativeName>
        <fullName evidence="1">Gly-tRNA(Ala) deacylase</fullName>
    </alternativeName>
</protein>
<name>DTD_THERP</name>
<comment type="function">
    <text evidence="1">An aminoacyl-tRNA editing enzyme that deacylates mischarged D-aminoacyl-tRNAs. Also deacylates mischarged glycyl-tRNA(Ala), protecting cells against glycine mischarging by AlaRS. Acts via tRNA-based rather than protein-based catalysis; rejects L-amino acids rather than detecting D-amino acids in the active site. By recycling D-aminoacyl-tRNA to D-amino acids and free tRNA molecules, this enzyme counteracts the toxicity associated with the formation of D-aminoacyl-tRNA entities in vivo and helps enforce protein L-homochirality.</text>
</comment>
<comment type="catalytic activity">
    <reaction evidence="1">
        <text>glycyl-tRNA(Ala) + H2O = tRNA(Ala) + glycine + H(+)</text>
        <dbReference type="Rhea" id="RHEA:53744"/>
        <dbReference type="Rhea" id="RHEA-COMP:9657"/>
        <dbReference type="Rhea" id="RHEA-COMP:13640"/>
        <dbReference type="ChEBI" id="CHEBI:15377"/>
        <dbReference type="ChEBI" id="CHEBI:15378"/>
        <dbReference type="ChEBI" id="CHEBI:57305"/>
        <dbReference type="ChEBI" id="CHEBI:78442"/>
        <dbReference type="ChEBI" id="CHEBI:78522"/>
        <dbReference type="EC" id="3.1.1.96"/>
    </reaction>
</comment>
<comment type="catalytic activity">
    <reaction evidence="1">
        <text>a D-aminoacyl-tRNA + H2O = a tRNA + a D-alpha-amino acid + H(+)</text>
        <dbReference type="Rhea" id="RHEA:13953"/>
        <dbReference type="Rhea" id="RHEA-COMP:10123"/>
        <dbReference type="Rhea" id="RHEA-COMP:10124"/>
        <dbReference type="ChEBI" id="CHEBI:15377"/>
        <dbReference type="ChEBI" id="CHEBI:15378"/>
        <dbReference type="ChEBI" id="CHEBI:59871"/>
        <dbReference type="ChEBI" id="CHEBI:78442"/>
        <dbReference type="ChEBI" id="CHEBI:79333"/>
        <dbReference type="EC" id="3.1.1.96"/>
    </reaction>
</comment>
<comment type="subunit">
    <text evidence="1">Homodimer.</text>
</comment>
<comment type="subcellular location">
    <subcellularLocation>
        <location evidence="1">Cytoplasm</location>
    </subcellularLocation>
</comment>
<comment type="domain">
    <text evidence="1">A Gly-cisPro motif from one monomer fits into the active site of the other monomer to allow specific chiral rejection of L-amino acids.</text>
</comment>
<comment type="similarity">
    <text evidence="1">Belongs to the DTD family.</text>
</comment>
<proteinExistence type="inferred from homology"/>
<organism>
    <name type="scientific">Thermomicrobium roseum (strain ATCC 27502 / DSM 5159 / P-2)</name>
    <dbReference type="NCBI Taxonomy" id="309801"/>
    <lineage>
        <taxon>Bacteria</taxon>
        <taxon>Pseudomonadati</taxon>
        <taxon>Thermomicrobiota</taxon>
        <taxon>Thermomicrobia</taxon>
        <taxon>Thermomicrobiales</taxon>
        <taxon>Thermomicrobiaceae</taxon>
        <taxon>Thermomicrobium</taxon>
    </lineage>
</organism>
<reference key="1">
    <citation type="journal article" date="2009" name="PLoS ONE">
        <title>Complete genome sequence of the aerobic CO-oxidizing thermophile Thermomicrobium roseum.</title>
        <authorList>
            <person name="Wu D."/>
            <person name="Raymond J."/>
            <person name="Wu M."/>
            <person name="Chatterji S."/>
            <person name="Ren Q."/>
            <person name="Graham J.E."/>
            <person name="Bryant D.A."/>
            <person name="Robb F."/>
            <person name="Colman A."/>
            <person name="Tallon L.J."/>
            <person name="Badger J.H."/>
            <person name="Madupu R."/>
            <person name="Ward N.L."/>
            <person name="Eisen J.A."/>
        </authorList>
    </citation>
    <scope>NUCLEOTIDE SEQUENCE [LARGE SCALE GENOMIC DNA]</scope>
    <source>
        <strain>ATCC 27502 / DSM 5159 / P-2</strain>
    </source>
</reference>
<dbReference type="EC" id="3.1.1.96" evidence="1"/>
<dbReference type="EMBL" id="CP001275">
    <property type="protein sequence ID" value="ACM04468.1"/>
    <property type="molecule type" value="Genomic_DNA"/>
</dbReference>
<dbReference type="RefSeq" id="WP_015922664.1">
    <property type="nucleotide sequence ID" value="NC_011959.1"/>
</dbReference>
<dbReference type="SMR" id="B9L111"/>
<dbReference type="STRING" id="309801.trd_1722"/>
<dbReference type="KEGG" id="tro:trd_1722"/>
<dbReference type="eggNOG" id="COG1490">
    <property type="taxonomic scope" value="Bacteria"/>
</dbReference>
<dbReference type="HOGENOM" id="CLU_076901_1_0_0"/>
<dbReference type="OrthoDB" id="9801395at2"/>
<dbReference type="Proteomes" id="UP000000447">
    <property type="component" value="Chromosome"/>
</dbReference>
<dbReference type="GO" id="GO:0005737">
    <property type="term" value="C:cytoplasm"/>
    <property type="evidence" value="ECO:0007669"/>
    <property type="project" value="UniProtKB-SubCell"/>
</dbReference>
<dbReference type="GO" id="GO:0051500">
    <property type="term" value="F:D-tyrosyl-tRNA(Tyr) deacylase activity"/>
    <property type="evidence" value="ECO:0007669"/>
    <property type="project" value="TreeGrafter"/>
</dbReference>
<dbReference type="GO" id="GO:0106026">
    <property type="term" value="F:Gly-tRNA(Ala) deacylase activity"/>
    <property type="evidence" value="ECO:0007669"/>
    <property type="project" value="UniProtKB-UniRule"/>
</dbReference>
<dbReference type="GO" id="GO:0043908">
    <property type="term" value="F:Ser(Gly)-tRNA(Ala) hydrolase activity"/>
    <property type="evidence" value="ECO:0007669"/>
    <property type="project" value="UniProtKB-UniRule"/>
</dbReference>
<dbReference type="GO" id="GO:0000049">
    <property type="term" value="F:tRNA binding"/>
    <property type="evidence" value="ECO:0007669"/>
    <property type="project" value="UniProtKB-UniRule"/>
</dbReference>
<dbReference type="GO" id="GO:0019478">
    <property type="term" value="P:D-amino acid catabolic process"/>
    <property type="evidence" value="ECO:0007669"/>
    <property type="project" value="UniProtKB-UniRule"/>
</dbReference>
<dbReference type="CDD" id="cd00563">
    <property type="entry name" value="Dtyr_deacylase"/>
    <property type="match status" value="1"/>
</dbReference>
<dbReference type="FunFam" id="3.50.80.10:FF:000001">
    <property type="entry name" value="D-aminoacyl-tRNA deacylase"/>
    <property type="match status" value="1"/>
</dbReference>
<dbReference type="Gene3D" id="3.50.80.10">
    <property type="entry name" value="D-tyrosyl-tRNA(Tyr) deacylase"/>
    <property type="match status" value="1"/>
</dbReference>
<dbReference type="HAMAP" id="MF_00518">
    <property type="entry name" value="Deacylase_Dtd"/>
    <property type="match status" value="1"/>
</dbReference>
<dbReference type="InterPro" id="IPR003732">
    <property type="entry name" value="Daa-tRNA_deacyls_DTD"/>
</dbReference>
<dbReference type="InterPro" id="IPR023509">
    <property type="entry name" value="DTD-like_sf"/>
</dbReference>
<dbReference type="NCBIfam" id="TIGR00256">
    <property type="entry name" value="D-aminoacyl-tRNA deacylase"/>
    <property type="match status" value="1"/>
</dbReference>
<dbReference type="PANTHER" id="PTHR10472:SF5">
    <property type="entry name" value="D-AMINOACYL-TRNA DEACYLASE 1"/>
    <property type="match status" value="1"/>
</dbReference>
<dbReference type="PANTHER" id="PTHR10472">
    <property type="entry name" value="D-TYROSYL-TRNA TYR DEACYLASE"/>
    <property type="match status" value="1"/>
</dbReference>
<dbReference type="Pfam" id="PF02580">
    <property type="entry name" value="Tyr_Deacylase"/>
    <property type="match status" value="1"/>
</dbReference>
<dbReference type="SUPFAM" id="SSF69500">
    <property type="entry name" value="DTD-like"/>
    <property type="match status" value="1"/>
</dbReference>
<keyword id="KW-0963">Cytoplasm</keyword>
<keyword id="KW-0378">Hydrolase</keyword>
<keyword id="KW-1185">Reference proteome</keyword>
<keyword id="KW-0694">RNA-binding</keyword>
<keyword id="KW-0820">tRNA-binding</keyword>
<gene>
    <name evidence="1" type="primary">dtd</name>
    <name type="ordered locus">trd_1722</name>
</gene>
<sequence length="154" mass="16486">MRVLLQRVSEASVTVDGTLVSSIGQGVLLLVGVRHGDDRATAEWLAHKVAHLRIFEDEAGKMNRSLLDVGGSALVVSQFTLYADVRKGRRPSFIEAAPPNEARPLVDTFAETLRALGVPVETGVFGAHMDVALVNDGPVTIWLDSAELRGGSLD</sequence>
<accession>B9L111</accession>
<evidence type="ECO:0000255" key="1">
    <source>
        <dbReference type="HAMAP-Rule" id="MF_00518"/>
    </source>
</evidence>
<feature type="chain" id="PRO_1000146220" description="D-aminoacyl-tRNA deacylase">
    <location>
        <begin position="1"/>
        <end position="154"/>
    </location>
</feature>
<feature type="short sequence motif" description="Gly-cisPro motif, important for rejection of L-amino acids" evidence="1">
    <location>
        <begin position="137"/>
        <end position="138"/>
    </location>
</feature>